<dbReference type="EC" id="1.3.5.2" evidence="1"/>
<dbReference type="EMBL" id="AE016822">
    <property type="protein sequence ID" value="AAT89318.1"/>
    <property type="molecule type" value="Genomic_DNA"/>
</dbReference>
<dbReference type="RefSeq" id="WP_011186308.1">
    <property type="nucleotide sequence ID" value="NC_006087.1"/>
</dbReference>
<dbReference type="SMR" id="Q6AE78"/>
<dbReference type="STRING" id="281090.Lxx15100"/>
<dbReference type="KEGG" id="lxx:Lxx15100"/>
<dbReference type="eggNOG" id="COG0167">
    <property type="taxonomic scope" value="Bacteria"/>
</dbReference>
<dbReference type="HOGENOM" id="CLU_013640_2_0_11"/>
<dbReference type="UniPathway" id="UPA00070">
    <property type="reaction ID" value="UER00946"/>
</dbReference>
<dbReference type="Proteomes" id="UP000001306">
    <property type="component" value="Chromosome"/>
</dbReference>
<dbReference type="GO" id="GO:0005737">
    <property type="term" value="C:cytoplasm"/>
    <property type="evidence" value="ECO:0007669"/>
    <property type="project" value="InterPro"/>
</dbReference>
<dbReference type="GO" id="GO:0005886">
    <property type="term" value="C:plasma membrane"/>
    <property type="evidence" value="ECO:0007669"/>
    <property type="project" value="UniProtKB-SubCell"/>
</dbReference>
<dbReference type="GO" id="GO:0106430">
    <property type="term" value="F:dihydroorotate dehydrogenase (quinone) activity"/>
    <property type="evidence" value="ECO:0007669"/>
    <property type="project" value="UniProtKB-EC"/>
</dbReference>
<dbReference type="GO" id="GO:0006207">
    <property type="term" value="P:'de novo' pyrimidine nucleobase biosynthetic process"/>
    <property type="evidence" value="ECO:0007669"/>
    <property type="project" value="InterPro"/>
</dbReference>
<dbReference type="GO" id="GO:0044205">
    <property type="term" value="P:'de novo' UMP biosynthetic process"/>
    <property type="evidence" value="ECO:0007669"/>
    <property type="project" value="UniProtKB-UniRule"/>
</dbReference>
<dbReference type="CDD" id="cd04738">
    <property type="entry name" value="DHOD_2_like"/>
    <property type="match status" value="1"/>
</dbReference>
<dbReference type="Gene3D" id="3.20.20.70">
    <property type="entry name" value="Aldolase class I"/>
    <property type="match status" value="1"/>
</dbReference>
<dbReference type="HAMAP" id="MF_00225">
    <property type="entry name" value="DHO_dh_type2"/>
    <property type="match status" value="1"/>
</dbReference>
<dbReference type="InterPro" id="IPR013785">
    <property type="entry name" value="Aldolase_TIM"/>
</dbReference>
<dbReference type="InterPro" id="IPR050074">
    <property type="entry name" value="DHO_dehydrogenase"/>
</dbReference>
<dbReference type="InterPro" id="IPR012135">
    <property type="entry name" value="Dihydroorotate_DH_1_2"/>
</dbReference>
<dbReference type="InterPro" id="IPR005719">
    <property type="entry name" value="Dihydroorotate_DH_2"/>
</dbReference>
<dbReference type="InterPro" id="IPR005720">
    <property type="entry name" value="Dihydroorotate_DH_cat"/>
</dbReference>
<dbReference type="InterPro" id="IPR001295">
    <property type="entry name" value="Dihydroorotate_DH_CS"/>
</dbReference>
<dbReference type="NCBIfam" id="NF003648">
    <property type="entry name" value="PRK05286.2-1"/>
    <property type="match status" value="1"/>
</dbReference>
<dbReference type="NCBIfam" id="NF003652">
    <property type="entry name" value="PRK05286.2-5"/>
    <property type="match status" value="1"/>
</dbReference>
<dbReference type="NCBIfam" id="TIGR01036">
    <property type="entry name" value="pyrD_sub2"/>
    <property type="match status" value="1"/>
</dbReference>
<dbReference type="PANTHER" id="PTHR48109:SF4">
    <property type="entry name" value="DIHYDROOROTATE DEHYDROGENASE (QUINONE), MITOCHONDRIAL"/>
    <property type="match status" value="1"/>
</dbReference>
<dbReference type="PANTHER" id="PTHR48109">
    <property type="entry name" value="DIHYDROOROTATE DEHYDROGENASE (QUINONE), MITOCHONDRIAL-RELATED"/>
    <property type="match status" value="1"/>
</dbReference>
<dbReference type="Pfam" id="PF01180">
    <property type="entry name" value="DHO_dh"/>
    <property type="match status" value="1"/>
</dbReference>
<dbReference type="PIRSF" id="PIRSF000164">
    <property type="entry name" value="DHO_oxidase"/>
    <property type="match status" value="1"/>
</dbReference>
<dbReference type="SUPFAM" id="SSF51395">
    <property type="entry name" value="FMN-linked oxidoreductases"/>
    <property type="match status" value="1"/>
</dbReference>
<dbReference type="PROSITE" id="PS00911">
    <property type="entry name" value="DHODEHASE_1"/>
    <property type="match status" value="1"/>
</dbReference>
<dbReference type="PROSITE" id="PS00912">
    <property type="entry name" value="DHODEHASE_2"/>
    <property type="match status" value="1"/>
</dbReference>
<protein>
    <recommendedName>
        <fullName evidence="1">Dihydroorotate dehydrogenase (quinone)</fullName>
        <ecNumber evidence="1">1.3.5.2</ecNumber>
    </recommendedName>
    <alternativeName>
        <fullName evidence="1">DHOdehase</fullName>
        <shortName evidence="1">DHOD</shortName>
        <shortName evidence="1">DHODase</shortName>
    </alternativeName>
    <alternativeName>
        <fullName evidence="1">Dihydroorotate oxidase</fullName>
    </alternativeName>
</protein>
<accession>Q6AE78</accession>
<organism>
    <name type="scientific">Leifsonia xyli subsp. xyli (strain CTCB07)</name>
    <dbReference type="NCBI Taxonomy" id="281090"/>
    <lineage>
        <taxon>Bacteria</taxon>
        <taxon>Bacillati</taxon>
        <taxon>Actinomycetota</taxon>
        <taxon>Actinomycetes</taxon>
        <taxon>Micrococcales</taxon>
        <taxon>Microbacteriaceae</taxon>
        <taxon>Leifsonia</taxon>
    </lineage>
</organism>
<sequence length="343" mass="36075">MYRTLFSLVLSRFDPERAHRLAFAAIRALPVIGLGSLLRRFTAPDPSLAVEALGLRFDSPFGIAAGFDKDGEGVIGLGALGFGHVEVGTITARPQPGNDKPRLFRLLPDRAVINRMGFNNHGAGAAANRLLRVRRARRRPVLGVNISKSRAVAVEDATADYLISARALAPVADYLVVNVSSPNTPGLRGLQEREALAPLLSAVKAASGKKPLLVKIAPDLTDEQIVAVARLAVELGLAGIIATNTTIARDGLSSDPAVVEAAGAGGLSGAPLAARSLEVLTLIRANVPPSLCVISVGGVETAQDVQRRLDAGATLVQGYTAFLYRGPLWARQITRGLSALRSR</sequence>
<gene>
    <name evidence="1" type="primary">pyrD</name>
    <name type="ordered locus">Lxx15100</name>
</gene>
<reference key="1">
    <citation type="journal article" date="2004" name="Mol. Plant Microbe Interact.">
        <title>The genome sequence of the Gram-positive sugarcane pathogen Leifsonia xyli subsp. xyli.</title>
        <authorList>
            <person name="Monteiro-Vitorello C.B."/>
            <person name="Camargo L.E.A."/>
            <person name="Van Sluys M.A."/>
            <person name="Kitajima J.P."/>
            <person name="Truffi D."/>
            <person name="do Amaral A.M."/>
            <person name="Harakava R."/>
            <person name="de Oliveira J.C.F."/>
            <person name="Wood D."/>
            <person name="de Oliveira M.C."/>
            <person name="Miyaki C.Y."/>
            <person name="Takita M.A."/>
            <person name="da Silva A.C.R."/>
            <person name="Furlan L.R."/>
            <person name="Carraro D.M."/>
            <person name="Camarotte G."/>
            <person name="Almeida N.F. Jr."/>
            <person name="Carrer H."/>
            <person name="Coutinho L.L."/>
            <person name="El-Dorry H.A."/>
            <person name="Ferro M.I.T."/>
            <person name="Gagliardi P.R."/>
            <person name="Giglioti E."/>
            <person name="Goldman M.H.S."/>
            <person name="Goldman G.H."/>
            <person name="Kimura E.T."/>
            <person name="Ferro E.S."/>
            <person name="Kuramae E.E."/>
            <person name="Lemos E.G.M."/>
            <person name="Lemos M.V.F."/>
            <person name="Mauro S.M.Z."/>
            <person name="Machado M.A."/>
            <person name="Marino C.L."/>
            <person name="Menck C.F."/>
            <person name="Nunes L.R."/>
            <person name="Oliveira R.C."/>
            <person name="Pereira G.G."/>
            <person name="Siqueira W."/>
            <person name="de Souza A.A."/>
            <person name="Tsai S.M."/>
            <person name="Zanca A.S."/>
            <person name="Simpson A.J.G."/>
            <person name="Brumbley S.M."/>
            <person name="Setubal J.C."/>
        </authorList>
    </citation>
    <scope>NUCLEOTIDE SEQUENCE [LARGE SCALE GENOMIC DNA]</scope>
    <source>
        <strain>CTCB07</strain>
    </source>
</reference>
<evidence type="ECO:0000255" key="1">
    <source>
        <dbReference type="HAMAP-Rule" id="MF_00225"/>
    </source>
</evidence>
<name>PYRD_LEIXX</name>
<feature type="chain" id="PRO_0000148451" description="Dihydroorotate dehydrogenase (quinone)">
    <location>
        <begin position="1"/>
        <end position="343"/>
    </location>
</feature>
<feature type="active site" description="Nucleophile" evidence="1">
    <location>
        <position position="181"/>
    </location>
</feature>
<feature type="binding site" evidence="1">
    <location>
        <begin position="65"/>
        <end position="69"/>
    </location>
    <ligand>
        <name>FMN</name>
        <dbReference type="ChEBI" id="CHEBI:58210"/>
    </ligand>
</feature>
<feature type="binding site" evidence="1">
    <location>
        <position position="69"/>
    </location>
    <ligand>
        <name>substrate</name>
    </ligand>
</feature>
<feature type="binding site" evidence="1">
    <location>
        <position position="89"/>
    </location>
    <ligand>
        <name>FMN</name>
        <dbReference type="ChEBI" id="CHEBI:58210"/>
    </ligand>
</feature>
<feature type="binding site" evidence="1">
    <location>
        <begin position="114"/>
        <end position="118"/>
    </location>
    <ligand>
        <name>substrate</name>
    </ligand>
</feature>
<feature type="binding site" evidence="1">
    <location>
        <position position="145"/>
    </location>
    <ligand>
        <name>FMN</name>
        <dbReference type="ChEBI" id="CHEBI:58210"/>
    </ligand>
</feature>
<feature type="binding site" evidence="1">
    <location>
        <position position="178"/>
    </location>
    <ligand>
        <name>FMN</name>
        <dbReference type="ChEBI" id="CHEBI:58210"/>
    </ligand>
</feature>
<feature type="binding site" evidence="1">
    <location>
        <position position="178"/>
    </location>
    <ligand>
        <name>substrate</name>
    </ligand>
</feature>
<feature type="binding site" evidence="1">
    <location>
        <position position="183"/>
    </location>
    <ligand>
        <name>substrate</name>
    </ligand>
</feature>
<feature type="binding site" evidence="1">
    <location>
        <position position="215"/>
    </location>
    <ligand>
        <name>FMN</name>
        <dbReference type="ChEBI" id="CHEBI:58210"/>
    </ligand>
</feature>
<feature type="binding site" evidence="1">
    <location>
        <position position="243"/>
    </location>
    <ligand>
        <name>FMN</name>
        <dbReference type="ChEBI" id="CHEBI:58210"/>
    </ligand>
</feature>
<feature type="binding site" evidence="1">
    <location>
        <begin position="244"/>
        <end position="245"/>
    </location>
    <ligand>
        <name>substrate</name>
    </ligand>
</feature>
<feature type="binding site" evidence="1">
    <location>
        <position position="269"/>
    </location>
    <ligand>
        <name>FMN</name>
        <dbReference type="ChEBI" id="CHEBI:58210"/>
    </ligand>
</feature>
<feature type="binding site" evidence="1">
    <location>
        <position position="298"/>
    </location>
    <ligand>
        <name>FMN</name>
        <dbReference type="ChEBI" id="CHEBI:58210"/>
    </ligand>
</feature>
<feature type="binding site" evidence="1">
    <location>
        <begin position="319"/>
        <end position="320"/>
    </location>
    <ligand>
        <name>FMN</name>
        <dbReference type="ChEBI" id="CHEBI:58210"/>
    </ligand>
</feature>
<proteinExistence type="inferred from homology"/>
<comment type="function">
    <text evidence="1">Catalyzes the conversion of dihydroorotate to orotate with quinone as electron acceptor.</text>
</comment>
<comment type="catalytic activity">
    <reaction evidence="1">
        <text>(S)-dihydroorotate + a quinone = orotate + a quinol</text>
        <dbReference type="Rhea" id="RHEA:30187"/>
        <dbReference type="ChEBI" id="CHEBI:24646"/>
        <dbReference type="ChEBI" id="CHEBI:30839"/>
        <dbReference type="ChEBI" id="CHEBI:30864"/>
        <dbReference type="ChEBI" id="CHEBI:132124"/>
        <dbReference type="EC" id="1.3.5.2"/>
    </reaction>
</comment>
<comment type="cofactor">
    <cofactor evidence="1">
        <name>FMN</name>
        <dbReference type="ChEBI" id="CHEBI:58210"/>
    </cofactor>
    <text evidence="1">Binds 1 FMN per subunit.</text>
</comment>
<comment type="pathway">
    <text evidence="1">Pyrimidine metabolism; UMP biosynthesis via de novo pathway; orotate from (S)-dihydroorotate (quinone route): step 1/1.</text>
</comment>
<comment type="subunit">
    <text evidence="1">Monomer.</text>
</comment>
<comment type="subcellular location">
    <subcellularLocation>
        <location evidence="1">Cell membrane</location>
        <topology evidence="1">Peripheral membrane protein</topology>
    </subcellularLocation>
</comment>
<comment type="similarity">
    <text evidence="1">Belongs to the dihydroorotate dehydrogenase family. Type 2 subfamily.</text>
</comment>
<keyword id="KW-1003">Cell membrane</keyword>
<keyword id="KW-0285">Flavoprotein</keyword>
<keyword id="KW-0288">FMN</keyword>
<keyword id="KW-0472">Membrane</keyword>
<keyword id="KW-0560">Oxidoreductase</keyword>
<keyword id="KW-0665">Pyrimidine biosynthesis</keyword>
<keyword id="KW-1185">Reference proteome</keyword>